<evidence type="ECO:0000255" key="1">
    <source>
        <dbReference type="HAMAP-Rule" id="MF_01547"/>
    </source>
</evidence>
<reference key="1">
    <citation type="journal article" date="2014" name="Stand. Genomic Sci.">
        <title>Complete genome sequence of Burkholderia phymatum STM815(T), a broad host range and efficient nitrogen-fixing symbiont of Mimosa species.</title>
        <authorList>
            <person name="Moulin L."/>
            <person name="Klonowska A."/>
            <person name="Caroline B."/>
            <person name="Booth K."/>
            <person name="Vriezen J.A."/>
            <person name="Melkonian R."/>
            <person name="James E.K."/>
            <person name="Young J.P."/>
            <person name="Bena G."/>
            <person name="Hauser L."/>
            <person name="Land M."/>
            <person name="Kyrpides N."/>
            <person name="Bruce D."/>
            <person name="Chain P."/>
            <person name="Copeland A."/>
            <person name="Pitluck S."/>
            <person name="Woyke T."/>
            <person name="Lizotte-Waniewski M."/>
            <person name="Bristow J."/>
            <person name="Riley M."/>
        </authorList>
    </citation>
    <scope>NUCLEOTIDE SEQUENCE [LARGE SCALE GENOMIC DNA]</scope>
    <source>
        <strain>DSM 17167 / CIP 108236 / LMG 21445 / STM815</strain>
    </source>
</reference>
<name>RLME_PARP8</name>
<comment type="function">
    <text evidence="1">Specifically methylates the uridine in position 2552 of 23S rRNA at the 2'-O position of the ribose in the fully assembled 50S ribosomal subunit.</text>
</comment>
<comment type="catalytic activity">
    <reaction evidence="1">
        <text>uridine(2552) in 23S rRNA + S-adenosyl-L-methionine = 2'-O-methyluridine(2552) in 23S rRNA + S-adenosyl-L-homocysteine + H(+)</text>
        <dbReference type="Rhea" id="RHEA:42720"/>
        <dbReference type="Rhea" id="RHEA-COMP:10202"/>
        <dbReference type="Rhea" id="RHEA-COMP:10203"/>
        <dbReference type="ChEBI" id="CHEBI:15378"/>
        <dbReference type="ChEBI" id="CHEBI:57856"/>
        <dbReference type="ChEBI" id="CHEBI:59789"/>
        <dbReference type="ChEBI" id="CHEBI:65315"/>
        <dbReference type="ChEBI" id="CHEBI:74478"/>
        <dbReference type="EC" id="2.1.1.166"/>
    </reaction>
</comment>
<comment type="subcellular location">
    <subcellularLocation>
        <location evidence="1">Cytoplasm</location>
    </subcellularLocation>
</comment>
<comment type="similarity">
    <text evidence="1">Belongs to the class I-like SAM-binding methyltransferase superfamily. RNA methyltransferase RlmE family.</text>
</comment>
<organism>
    <name type="scientific">Paraburkholderia phymatum (strain DSM 17167 / CIP 108236 / LMG 21445 / STM815)</name>
    <name type="common">Burkholderia phymatum</name>
    <dbReference type="NCBI Taxonomy" id="391038"/>
    <lineage>
        <taxon>Bacteria</taxon>
        <taxon>Pseudomonadati</taxon>
        <taxon>Pseudomonadota</taxon>
        <taxon>Betaproteobacteria</taxon>
        <taxon>Burkholderiales</taxon>
        <taxon>Burkholderiaceae</taxon>
        <taxon>Paraburkholderia</taxon>
    </lineage>
</organism>
<protein>
    <recommendedName>
        <fullName evidence="1">Ribosomal RNA large subunit methyltransferase E</fullName>
        <ecNumber evidence="1">2.1.1.166</ecNumber>
    </recommendedName>
    <alternativeName>
        <fullName evidence="1">23S rRNA Um2552 methyltransferase</fullName>
    </alternativeName>
    <alternativeName>
        <fullName evidence="1">rRNA (uridine-2'-O-)-methyltransferase</fullName>
    </alternativeName>
</protein>
<keyword id="KW-0963">Cytoplasm</keyword>
<keyword id="KW-0489">Methyltransferase</keyword>
<keyword id="KW-1185">Reference proteome</keyword>
<keyword id="KW-0698">rRNA processing</keyword>
<keyword id="KW-0949">S-adenosyl-L-methionine</keyword>
<keyword id="KW-0808">Transferase</keyword>
<sequence>MAKNKFNTSWLHDHINDPYVKMAQREGYRARAAYKLKEIDEQDKLIRPGQVIVDLGAAPGSWSQYVRNKLSQGKHRDAQREGGIDGTIIALDLLPMEPIADVHFIQGDFREDNVLAQLEEVVGDRDVDLVISDMAPNLSGVAVADAARIEHVCDLALEFAQNHLKPDGALLVKCFHGSGYSQIVEKFKHQFKTVAARKPKASRDKSSETFILGRHLKRPR</sequence>
<feature type="chain" id="PRO_1000194982" description="Ribosomal RNA large subunit methyltransferase E">
    <location>
        <begin position="1"/>
        <end position="220"/>
    </location>
</feature>
<feature type="active site" description="Proton acceptor" evidence="1">
    <location>
        <position position="173"/>
    </location>
</feature>
<feature type="binding site" evidence="1">
    <location>
        <position position="60"/>
    </location>
    <ligand>
        <name>S-adenosyl-L-methionine</name>
        <dbReference type="ChEBI" id="CHEBI:59789"/>
    </ligand>
</feature>
<feature type="binding site" evidence="1">
    <location>
        <position position="62"/>
    </location>
    <ligand>
        <name>S-adenosyl-L-methionine</name>
        <dbReference type="ChEBI" id="CHEBI:59789"/>
    </ligand>
</feature>
<feature type="binding site" evidence="1">
    <location>
        <position position="92"/>
    </location>
    <ligand>
        <name>S-adenosyl-L-methionine</name>
        <dbReference type="ChEBI" id="CHEBI:59789"/>
    </ligand>
</feature>
<feature type="binding site" evidence="1">
    <location>
        <position position="108"/>
    </location>
    <ligand>
        <name>S-adenosyl-L-methionine</name>
        <dbReference type="ChEBI" id="CHEBI:59789"/>
    </ligand>
</feature>
<feature type="binding site" evidence="1">
    <location>
        <position position="133"/>
    </location>
    <ligand>
        <name>S-adenosyl-L-methionine</name>
        <dbReference type="ChEBI" id="CHEBI:59789"/>
    </ligand>
</feature>
<gene>
    <name evidence="1" type="primary">rlmE</name>
    <name evidence="1" type="synonym">ftsJ</name>
    <name evidence="1" type="synonym">rrmJ</name>
    <name type="ordered locus">Bphy_0878</name>
</gene>
<dbReference type="EC" id="2.1.1.166" evidence="1"/>
<dbReference type="EMBL" id="CP001043">
    <property type="protein sequence ID" value="ACC70067.1"/>
    <property type="molecule type" value="Genomic_DNA"/>
</dbReference>
<dbReference type="RefSeq" id="WP_012400286.1">
    <property type="nucleotide sequence ID" value="NC_010622.1"/>
</dbReference>
<dbReference type="SMR" id="B2JFN9"/>
<dbReference type="STRING" id="391038.Bphy_0878"/>
<dbReference type="KEGG" id="bph:Bphy_0878"/>
<dbReference type="eggNOG" id="COG0293">
    <property type="taxonomic scope" value="Bacteria"/>
</dbReference>
<dbReference type="HOGENOM" id="CLU_009422_4_1_4"/>
<dbReference type="OrthoDB" id="9790080at2"/>
<dbReference type="Proteomes" id="UP000001192">
    <property type="component" value="Chromosome 1"/>
</dbReference>
<dbReference type="GO" id="GO:0005737">
    <property type="term" value="C:cytoplasm"/>
    <property type="evidence" value="ECO:0007669"/>
    <property type="project" value="UniProtKB-SubCell"/>
</dbReference>
<dbReference type="GO" id="GO:0008650">
    <property type="term" value="F:rRNA (uridine-2'-O-)-methyltransferase activity"/>
    <property type="evidence" value="ECO:0007669"/>
    <property type="project" value="UniProtKB-UniRule"/>
</dbReference>
<dbReference type="FunFam" id="3.40.50.150:FF:000005">
    <property type="entry name" value="Ribosomal RNA large subunit methyltransferase E"/>
    <property type="match status" value="1"/>
</dbReference>
<dbReference type="Gene3D" id="3.40.50.150">
    <property type="entry name" value="Vaccinia Virus protein VP39"/>
    <property type="match status" value="1"/>
</dbReference>
<dbReference type="HAMAP" id="MF_01547">
    <property type="entry name" value="RNA_methyltr_E"/>
    <property type="match status" value="1"/>
</dbReference>
<dbReference type="InterPro" id="IPR050082">
    <property type="entry name" value="RNA_methyltr_RlmE"/>
</dbReference>
<dbReference type="InterPro" id="IPR002877">
    <property type="entry name" value="RNA_MeTrfase_FtsJ_dom"/>
</dbReference>
<dbReference type="InterPro" id="IPR015507">
    <property type="entry name" value="rRNA-MeTfrase_E"/>
</dbReference>
<dbReference type="InterPro" id="IPR029063">
    <property type="entry name" value="SAM-dependent_MTases_sf"/>
</dbReference>
<dbReference type="PANTHER" id="PTHR10920">
    <property type="entry name" value="RIBOSOMAL RNA METHYLTRANSFERASE"/>
    <property type="match status" value="1"/>
</dbReference>
<dbReference type="PANTHER" id="PTHR10920:SF18">
    <property type="entry name" value="RRNA METHYLTRANSFERASE 2, MITOCHONDRIAL"/>
    <property type="match status" value="1"/>
</dbReference>
<dbReference type="Pfam" id="PF01728">
    <property type="entry name" value="FtsJ"/>
    <property type="match status" value="1"/>
</dbReference>
<dbReference type="PIRSF" id="PIRSF005461">
    <property type="entry name" value="23S_rRNA_mtase"/>
    <property type="match status" value="1"/>
</dbReference>
<dbReference type="SUPFAM" id="SSF53335">
    <property type="entry name" value="S-adenosyl-L-methionine-dependent methyltransferases"/>
    <property type="match status" value="1"/>
</dbReference>
<proteinExistence type="inferred from homology"/>
<accession>B2JFN9</accession>